<protein>
    <recommendedName>
        <fullName evidence="1">Methylenetetrahydrofolate--tRNA-(uracil-5-)-methyltransferase TrmFO</fullName>
        <ecNumber evidence="1">2.1.1.74</ecNumber>
    </recommendedName>
    <alternativeName>
        <fullName evidence="1">Folate-dependent tRNA (uracil-5-)-methyltransferase</fullName>
    </alternativeName>
    <alternativeName>
        <fullName evidence="1">Folate-dependent tRNA(M-5-U54)-methyltransferase</fullName>
    </alternativeName>
</protein>
<keyword id="KW-0963">Cytoplasm</keyword>
<keyword id="KW-0274">FAD</keyword>
<keyword id="KW-0285">Flavoprotein</keyword>
<keyword id="KW-0489">Methyltransferase</keyword>
<keyword id="KW-0520">NAD</keyword>
<keyword id="KW-0521">NADP</keyword>
<keyword id="KW-1185">Reference proteome</keyword>
<keyword id="KW-0808">Transferase</keyword>
<keyword id="KW-0819">tRNA processing</keyword>
<dbReference type="EC" id="2.1.1.74" evidence="1"/>
<dbReference type="EMBL" id="BA000004">
    <property type="protein sequence ID" value="BAB06185.1"/>
    <property type="molecule type" value="Genomic_DNA"/>
</dbReference>
<dbReference type="PIR" id="B83958">
    <property type="entry name" value="B83958"/>
</dbReference>
<dbReference type="RefSeq" id="WP_010898619.1">
    <property type="nucleotide sequence ID" value="NC_002570.2"/>
</dbReference>
<dbReference type="SMR" id="Q9KA24"/>
<dbReference type="STRING" id="272558.gene:10728364"/>
<dbReference type="KEGG" id="bha:BH2466"/>
<dbReference type="eggNOG" id="COG1206">
    <property type="taxonomic scope" value="Bacteria"/>
</dbReference>
<dbReference type="HOGENOM" id="CLU_033057_1_0_9"/>
<dbReference type="OrthoDB" id="9803114at2"/>
<dbReference type="Proteomes" id="UP000001258">
    <property type="component" value="Chromosome"/>
</dbReference>
<dbReference type="GO" id="GO:0005829">
    <property type="term" value="C:cytosol"/>
    <property type="evidence" value="ECO:0007669"/>
    <property type="project" value="TreeGrafter"/>
</dbReference>
<dbReference type="GO" id="GO:0050660">
    <property type="term" value="F:flavin adenine dinucleotide binding"/>
    <property type="evidence" value="ECO:0007669"/>
    <property type="project" value="UniProtKB-UniRule"/>
</dbReference>
<dbReference type="GO" id="GO:0047151">
    <property type="term" value="F:tRNA (uracil(54)-C5)-methyltransferase activity, 5,10-methylenetetrahydrofolate-dependent"/>
    <property type="evidence" value="ECO:0007669"/>
    <property type="project" value="UniProtKB-UniRule"/>
</dbReference>
<dbReference type="GO" id="GO:0030488">
    <property type="term" value="P:tRNA methylation"/>
    <property type="evidence" value="ECO:0007669"/>
    <property type="project" value="TreeGrafter"/>
</dbReference>
<dbReference type="GO" id="GO:0002098">
    <property type="term" value="P:tRNA wobble uridine modification"/>
    <property type="evidence" value="ECO:0007669"/>
    <property type="project" value="TreeGrafter"/>
</dbReference>
<dbReference type="FunFam" id="3.50.50.60:FF:000035">
    <property type="entry name" value="Methylenetetrahydrofolate--tRNA-(uracil-5-)-methyltransferase TrmFO"/>
    <property type="match status" value="1"/>
</dbReference>
<dbReference type="FunFam" id="3.50.50.60:FF:000040">
    <property type="entry name" value="Methylenetetrahydrofolate--tRNA-(uracil-5-)-methyltransferase TrmFO"/>
    <property type="match status" value="1"/>
</dbReference>
<dbReference type="Gene3D" id="3.50.50.60">
    <property type="entry name" value="FAD/NAD(P)-binding domain"/>
    <property type="match status" value="2"/>
</dbReference>
<dbReference type="HAMAP" id="MF_01037">
    <property type="entry name" value="TrmFO"/>
    <property type="match status" value="1"/>
</dbReference>
<dbReference type="InterPro" id="IPR036188">
    <property type="entry name" value="FAD/NAD-bd_sf"/>
</dbReference>
<dbReference type="InterPro" id="IPR002218">
    <property type="entry name" value="MnmG-rel"/>
</dbReference>
<dbReference type="InterPro" id="IPR020595">
    <property type="entry name" value="MnmG-rel_CS"/>
</dbReference>
<dbReference type="InterPro" id="IPR040131">
    <property type="entry name" value="MnmG_N"/>
</dbReference>
<dbReference type="InterPro" id="IPR004417">
    <property type="entry name" value="TrmFO"/>
</dbReference>
<dbReference type="NCBIfam" id="TIGR00137">
    <property type="entry name" value="gid_trmFO"/>
    <property type="match status" value="1"/>
</dbReference>
<dbReference type="NCBIfam" id="NF003739">
    <property type="entry name" value="PRK05335.1"/>
    <property type="match status" value="1"/>
</dbReference>
<dbReference type="PANTHER" id="PTHR11806">
    <property type="entry name" value="GLUCOSE INHIBITED DIVISION PROTEIN A"/>
    <property type="match status" value="1"/>
</dbReference>
<dbReference type="PANTHER" id="PTHR11806:SF2">
    <property type="entry name" value="METHYLENETETRAHYDROFOLATE--TRNA-(URACIL-5-)-METHYLTRANSFERASE TRMFO"/>
    <property type="match status" value="1"/>
</dbReference>
<dbReference type="Pfam" id="PF01134">
    <property type="entry name" value="GIDA"/>
    <property type="match status" value="1"/>
</dbReference>
<dbReference type="SUPFAM" id="SSF51905">
    <property type="entry name" value="FAD/NAD(P)-binding domain"/>
    <property type="match status" value="1"/>
</dbReference>
<dbReference type="PROSITE" id="PS01281">
    <property type="entry name" value="GIDA_2"/>
    <property type="match status" value="1"/>
</dbReference>
<evidence type="ECO:0000255" key="1">
    <source>
        <dbReference type="HAMAP-Rule" id="MF_01037"/>
    </source>
</evidence>
<comment type="function">
    <text evidence="1">Catalyzes the folate-dependent formation of 5-methyl-uridine at position 54 (M-5-U54) in all tRNAs.</text>
</comment>
<comment type="catalytic activity">
    <reaction evidence="1">
        <text>uridine(54) in tRNA + (6R)-5,10-methylene-5,6,7,8-tetrahydrofolate + NADH + H(+) = 5-methyluridine(54) in tRNA + (6S)-5,6,7,8-tetrahydrofolate + NAD(+)</text>
        <dbReference type="Rhea" id="RHEA:16873"/>
        <dbReference type="Rhea" id="RHEA-COMP:10167"/>
        <dbReference type="Rhea" id="RHEA-COMP:10193"/>
        <dbReference type="ChEBI" id="CHEBI:15378"/>
        <dbReference type="ChEBI" id="CHEBI:15636"/>
        <dbReference type="ChEBI" id="CHEBI:57453"/>
        <dbReference type="ChEBI" id="CHEBI:57540"/>
        <dbReference type="ChEBI" id="CHEBI:57945"/>
        <dbReference type="ChEBI" id="CHEBI:65315"/>
        <dbReference type="ChEBI" id="CHEBI:74447"/>
        <dbReference type="EC" id="2.1.1.74"/>
    </reaction>
</comment>
<comment type="catalytic activity">
    <reaction evidence="1">
        <text>uridine(54) in tRNA + (6R)-5,10-methylene-5,6,7,8-tetrahydrofolate + NADPH + H(+) = 5-methyluridine(54) in tRNA + (6S)-5,6,7,8-tetrahydrofolate + NADP(+)</text>
        <dbReference type="Rhea" id="RHEA:62372"/>
        <dbReference type="Rhea" id="RHEA-COMP:10167"/>
        <dbReference type="Rhea" id="RHEA-COMP:10193"/>
        <dbReference type="ChEBI" id="CHEBI:15378"/>
        <dbReference type="ChEBI" id="CHEBI:15636"/>
        <dbReference type="ChEBI" id="CHEBI:57453"/>
        <dbReference type="ChEBI" id="CHEBI:57783"/>
        <dbReference type="ChEBI" id="CHEBI:58349"/>
        <dbReference type="ChEBI" id="CHEBI:65315"/>
        <dbReference type="ChEBI" id="CHEBI:74447"/>
        <dbReference type="EC" id="2.1.1.74"/>
    </reaction>
</comment>
<comment type="cofactor">
    <cofactor evidence="1">
        <name>FAD</name>
        <dbReference type="ChEBI" id="CHEBI:57692"/>
    </cofactor>
</comment>
<comment type="subcellular location">
    <subcellularLocation>
        <location evidence="1">Cytoplasm</location>
    </subcellularLocation>
</comment>
<comment type="similarity">
    <text evidence="1">Belongs to the MnmG family. TrmFO subfamily.</text>
</comment>
<proteinExistence type="inferred from homology"/>
<name>TRMFO_HALH5</name>
<gene>
    <name evidence="1" type="primary">trmFO</name>
    <name type="synonym">gid</name>
    <name type="ordered locus">BH2466</name>
</gene>
<sequence>MSTPHINVIGAGLAGSEAAWQIAERGIAVHLYEMRPVKQTPAHHTDKFAELVCSNSLRGNSLTNAVGVLKEEMRRLNSVIIRSADRCSVPAGGALAVDRHEFAQAVTEAVREHPNVTVFTEEIQKIPDGPTVIATGPLTSKALSEQLKQLTGEEYLYFYDAAAPIIETDSINMDKVYLKSRYDKGEAAYLNCPMTEEEFDRFYEALISAETVPLKEFEKEVFFEGCMPVEVMAKRGKKTLLFGPMKPVGLEDPKTGKRPYAVVQLRRDNQSGTLYNIVGFQTHLKWGPQKEVIQLIPGLENAEIVRYGVMHRNTFINSPNLLKPTYQYKKRKDLFFAGQITGVEGYVESAAAGLVAGLNAARLVQSKELVVFPDTTMLGSMANYITTANSKNFQPMNANFGLLPPLDTRIKDKKTRYETLAGRALESIQNFVKKM</sequence>
<reference key="1">
    <citation type="journal article" date="2000" name="Nucleic Acids Res.">
        <title>Complete genome sequence of the alkaliphilic bacterium Bacillus halodurans and genomic sequence comparison with Bacillus subtilis.</title>
        <authorList>
            <person name="Takami H."/>
            <person name="Nakasone K."/>
            <person name="Takaki Y."/>
            <person name="Maeno G."/>
            <person name="Sasaki R."/>
            <person name="Masui N."/>
            <person name="Fuji F."/>
            <person name="Hirama C."/>
            <person name="Nakamura Y."/>
            <person name="Ogasawara N."/>
            <person name="Kuhara S."/>
            <person name="Horikoshi K."/>
        </authorList>
    </citation>
    <scope>NUCLEOTIDE SEQUENCE [LARGE SCALE GENOMIC DNA]</scope>
    <source>
        <strain>ATCC BAA-125 / DSM 18197 / FERM 7344 / JCM 9153 / C-125</strain>
    </source>
</reference>
<accession>Q9KA24</accession>
<organism>
    <name type="scientific">Halalkalibacterium halodurans (strain ATCC BAA-125 / DSM 18197 / FERM 7344 / JCM 9153 / C-125)</name>
    <name type="common">Bacillus halodurans</name>
    <dbReference type="NCBI Taxonomy" id="272558"/>
    <lineage>
        <taxon>Bacteria</taxon>
        <taxon>Bacillati</taxon>
        <taxon>Bacillota</taxon>
        <taxon>Bacilli</taxon>
        <taxon>Bacillales</taxon>
        <taxon>Bacillaceae</taxon>
        <taxon>Halalkalibacterium (ex Joshi et al. 2022)</taxon>
    </lineage>
</organism>
<feature type="chain" id="PRO_0000117232" description="Methylenetetrahydrofolate--tRNA-(uracil-5-)-methyltransferase TrmFO">
    <location>
        <begin position="1"/>
        <end position="435"/>
    </location>
</feature>
<feature type="binding site" evidence="1">
    <location>
        <begin position="10"/>
        <end position="15"/>
    </location>
    <ligand>
        <name>FAD</name>
        <dbReference type="ChEBI" id="CHEBI:57692"/>
    </ligand>
</feature>